<evidence type="ECO:0000250" key="1"/>
<evidence type="ECO:0000250" key="2">
    <source>
        <dbReference type="UniProtKB" id="Q969M7"/>
    </source>
</evidence>
<evidence type="ECO:0000255" key="3">
    <source>
        <dbReference type="PROSITE-ProRule" id="PRU00388"/>
    </source>
</evidence>
<evidence type="ECO:0000255" key="4">
    <source>
        <dbReference type="PROSITE-ProRule" id="PRU10133"/>
    </source>
</evidence>
<accession>Q1RMW1</accession>
<comment type="function">
    <text evidence="2">Accepts the ubiquitin-like protein NEDD8 from the UBA3-NAE1 E1 complex and catalyzes its covalent attachment to other proteins. Together with the E3 ubiquitin ligase RNF7/RBX2, specifically neddylates cullin-5 (CUL5). Does not neddylate CUL1, CUL2, CUL3, CUL4A or CUL4B. Mediates neddylation of the CUL9-RBX1 complex (By similarity).</text>
</comment>
<comment type="catalytic activity">
    <reaction evidence="2">
        <text>[E1 NEDD8-activating enzyme]-S-[NEDD8 protein]-yl-L-cysteine + [E2 NEDD8-conjugating enzyme]-L-cysteine = [E1 NEDD8-activating enzyme]-L-cysteine + [E2 NEDD8-conjugating enzyme]-S-[NEDD8-protein]-yl-L-cysteine.</text>
        <dbReference type="EC" id="2.3.2.34"/>
    </reaction>
</comment>
<comment type="pathway">
    <text evidence="2">Protein modification; protein neddylation.</text>
</comment>
<comment type="subunit">
    <text evidence="2">Interacts with UBA3 and RBX2. Interacts (N-terminally acetylated form) with (via DCUN1 domain) DCUN1D1, DCUN1D2, DCUN1D3, DCUN1D4 and DCUN1D5 (By similarity).</text>
</comment>
<comment type="PTM">
    <text evidence="2">The acetylation of Met-1 increases affinity for DCUN1D3 by about 2 orders of magnitude and is crucial for NEDD8 transfer to cullins.</text>
</comment>
<comment type="similarity">
    <text evidence="3">Belongs to the ubiquitin-conjugating enzyme family. UBE2F subfamily.</text>
</comment>
<gene>
    <name type="primary">UBE2F</name>
</gene>
<name>UBE2F_BOVIN</name>
<protein>
    <recommendedName>
        <fullName>NEDD8-conjugating enzyme UBE2F</fullName>
        <ecNumber evidence="2">2.3.2.34</ecNumber>
    </recommendedName>
    <alternativeName>
        <fullName>NEDD8 carrier protein UBE2F</fullName>
    </alternativeName>
    <alternativeName>
        <fullName>NEDD8 protein ligase UBE2F</fullName>
    </alternativeName>
    <alternativeName>
        <fullName>NEDD8-conjugating enzyme 2</fullName>
    </alternativeName>
    <alternativeName>
        <fullName>RING-type E3 NEDD8 transferase UBE2F</fullName>
    </alternativeName>
    <alternativeName>
        <fullName>Ubiquitin-conjugating enzyme E2 F</fullName>
    </alternativeName>
</protein>
<keyword id="KW-0007">Acetylation</keyword>
<keyword id="KW-0067">ATP-binding</keyword>
<keyword id="KW-0547">Nucleotide-binding</keyword>
<keyword id="KW-1185">Reference proteome</keyword>
<keyword id="KW-0808">Transferase</keyword>
<keyword id="KW-0833">Ubl conjugation pathway</keyword>
<reference key="1">
    <citation type="submission" date="2006-04" db="EMBL/GenBank/DDBJ databases">
        <authorList>
            <consortium name="NIH - Mammalian Gene Collection (MGC) project"/>
        </authorList>
    </citation>
    <scope>NUCLEOTIDE SEQUENCE [LARGE SCALE MRNA]</scope>
    <source>
        <strain>Hereford</strain>
        <tissue>Uterus</tissue>
    </source>
</reference>
<dbReference type="EC" id="2.3.2.34" evidence="2"/>
<dbReference type="EMBL" id="BC114675">
    <property type="protein sequence ID" value="AAI14676.1"/>
    <property type="molecule type" value="mRNA"/>
</dbReference>
<dbReference type="RefSeq" id="NP_001069911.1">
    <property type="nucleotide sequence ID" value="NM_001076443.1"/>
</dbReference>
<dbReference type="SMR" id="Q1RMW1"/>
<dbReference type="FunCoup" id="Q1RMW1">
    <property type="interactions" value="1691"/>
</dbReference>
<dbReference type="STRING" id="9913.ENSBTAP00000036864"/>
<dbReference type="PaxDb" id="9913-ENSBTAP00000036864"/>
<dbReference type="GeneID" id="617083"/>
<dbReference type="KEGG" id="bta:617083"/>
<dbReference type="CTD" id="140739"/>
<dbReference type="VEuPathDB" id="HostDB:ENSBTAG00000026114"/>
<dbReference type="eggNOG" id="KOG0420">
    <property type="taxonomic scope" value="Eukaryota"/>
</dbReference>
<dbReference type="HOGENOM" id="CLU_030988_6_4_1"/>
<dbReference type="InParanoid" id="Q1RMW1"/>
<dbReference type="OMA" id="VMQYAKR"/>
<dbReference type="OrthoDB" id="10249039at2759"/>
<dbReference type="TreeFam" id="TF101125"/>
<dbReference type="Reactome" id="R-BTA-8951664">
    <property type="pathway name" value="Neddylation"/>
</dbReference>
<dbReference type="Reactome" id="R-BTA-983168">
    <property type="pathway name" value="Antigen processing: Ubiquitination &amp; Proteasome degradation"/>
</dbReference>
<dbReference type="UniPathway" id="UPA00885"/>
<dbReference type="Proteomes" id="UP000009136">
    <property type="component" value="Chromosome 3"/>
</dbReference>
<dbReference type="Bgee" id="ENSBTAG00000026114">
    <property type="expression patterns" value="Expressed in pons and 108 other cell types or tissues"/>
</dbReference>
<dbReference type="GO" id="GO:0005829">
    <property type="term" value="C:cytosol"/>
    <property type="evidence" value="ECO:0000318"/>
    <property type="project" value="GO_Central"/>
</dbReference>
<dbReference type="GO" id="GO:0005634">
    <property type="term" value="C:nucleus"/>
    <property type="evidence" value="ECO:0000318"/>
    <property type="project" value="GO_Central"/>
</dbReference>
<dbReference type="GO" id="GO:0005524">
    <property type="term" value="F:ATP binding"/>
    <property type="evidence" value="ECO:0007669"/>
    <property type="project" value="UniProtKB-KW"/>
</dbReference>
<dbReference type="GO" id="GO:0061654">
    <property type="term" value="F:NEDD8 conjugating enzyme activity"/>
    <property type="evidence" value="ECO:0000250"/>
    <property type="project" value="UniProtKB"/>
</dbReference>
<dbReference type="GO" id="GO:0061663">
    <property type="term" value="F:NEDD8 ligase activity"/>
    <property type="evidence" value="ECO:0007669"/>
    <property type="project" value="UniProtKB-EC"/>
</dbReference>
<dbReference type="GO" id="GO:0019788">
    <property type="term" value="F:NEDD8 transferase activity"/>
    <property type="evidence" value="ECO:0000318"/>
    <property type="project" value="GO_Central"/>
</dbReference>
<dbReference type="GO" id="GO:0045116">
    <property type="term" value="P:protein neddylation"/>
    <property type="evidence" value="ECO:0000250"/>
    <property type="project" value="UniProtKB"/>
</dbReference>
<dbReference type="CDD" id="cd23794">
    <property type="entry name" value="UBCc_UBE2F_UBE2M"/>
    <property type="match status" value="1"/>
</dbReference>
<dbReference type="FunFam" id="3.10.110.10:FF:000033">
    <property type="entry name" value="NEDD8-conjugating enzyme UBE2F"/>
    <property type="match status" value="1"/>
</dbReference>
<dbReference type="Gene3D" id="3.10.110.10">
    <property type="entry name" value="Ubiquitin Conjugating Enzyme"/>
    <property type="match status" value="1"/>
</dbReference>
<dbReference type="InterPro" id="IPR050113">
    <property type="entry name" value="Ub_conjugating_enzyme"/>
</dbReference>
<dbReference type="InterPro" id="IPR000608">
    <property type="entry name" value="UBQ-conjugat_E2_core"/>
</dbReference>
<dbReference type="InterPro" id="IPR023313">
    <property type="entry name" value="UBQ-conjugating_AS"/>
</dbReference>
<dbReference type="InterPro" id="IPR016135">
    <property type="entry name" value="UBQ-conjugating_enzyme/RWD"/>
</dbReference>
<dbReference type="PANTHER" id="PTHR24067">
    <property type="entry name" value="UBIQUITIN-CONJUGATING ENZYME E2"/>
    <property type="match status" value="1"/>
</dbReference>
<dbReference type="Pfam" id="PF00179">
    <property type="entry name" value="UQ_con"/>
    <property type="match status" value="1"/>
</dbReference>
<dbReference type="SMART" id="SM00212">
    <property type="entry name" value="UBCc"/>
    <property type="match status" value="1"/>
</dbReference>
<dbReference type="SUPFAM" id="SSF54495">
    <property type="entry name" value="UBC-like"/>
    <property type="match status" value="1"/>
</dbReference>
<dbReference type="PROSITE" id="PS00183">
    <property type="entry name" value="UBC_1"/>
    <property type="match status" value="1"/>
</dbReference>
<dbReference type="PROSITE" id="PS50127">
    <property type="entry name" value="UBC_2"/>
    <property type="match status" value="1"/>
</dbReference>
<sequence>MLTLASKLKRDDGLKGSRASATASDSTRRVSVRDRLLVKEVAELEANLPCTCKVHFPDPNKLHCFQLTVTPDEGYYQGGKFQFETEVPDAYNMVPPKVKCLTRIWHPNITETGEICLSLLREHSIDGTGWAPTRTLKDVVWGLNSLFTDLLNFDDPLNIEAAEHHLRDKEDFRNKVEDYIKRYAR</sequence>
<feature type="chain" id="PRO_0000263076" description="NEDD8-conjugating enzyme UBE2F">
    <location>
        <begin position="1"/>
        <end position="185"/>
    </location>
</feature>
<feature type="domain" description="UBC core" evidence="3">
    <location>
        <begin position="32"/>
        <end position="185"/>
    </location>
</feature>
<feature type="region of interest" description="Interaction with UBA3" evidence="1">
    <location>
        <begin position="1"/>
        <end position="29"/>
    </location>
</feature>
<feature type="active site" description="Glycyl thioester intermediate" evidence="3 4">
    <location>
        <position position="116"/>
    </location>
</feature>
<feature type="modified residue" description="N-acetylmethionine" evidence="2">
    <location>
        <position position="1"/>
    </location>
</feature>
<proteinExistence type="evidence at transcript level"/>
<organism>
    <name type="scientific">Bos taurus</name>
    <name type="common">Bovine</name>
    <dbReference type="NCBI Taxonomy" id="9913"/>
    <lineage>
        <taxon>Eukaryota</taxon>
        <taxon>Metazoa</taxon>
        <taxon>Chordata</taxon>
        <taxon>Craniata</taxon>
        <taxon>Vertebrata</taxon>
        <taxon>Euteleostomi</taxon>
        <taxon>Mammalia</taxon>
        <taxon>Eutheria</taxon>
        <taxon>Laurasiatheria</taxon>
        <taxon>Artiodactyla</taxon>
        <taxon>Ruminantia</taxon>
        <taxon>Pecora</taxon>
        <taxon>Bovidae</taxon>
        <taxon>Bovinae</taxon>
        <taxon>Bos</taxon>
    </lineage>
</organism>